<dbReference type="EC" id="2.1.1.37" evidence="3"/>
<dbReference type="EMBL" id="AP011615">
    <property type="protein sequence ID" value="BAI92110.1"/>
    <property type="molecule type" value="Genomic_DNA"/>
</dbReference>
<dbReference type="SMR" id="D4ZX35"/>
<dbReference type="REBASE" id="25961">
    <property type="entry name" value="M.AplI"/>
</dbReference>
<dbReference type="KEGG" id="arp:NIES39_K04650"/>
<dbReference type="PATRIC" id="fig|696747.3.peg.2191"/>
<dbReference type="eggNOG" id="COG0270">
    <property type="taxonomic scope" value="Bacteria"/>
</dbReference>
<dbReference type="HOGENOM" id="CLU_006958_2_0_3"/>
<dbReference type="OrthoDB" id="451520at2"/>
<dbReference type="PRO" id="PR:D4ZX35"/>
<dbReference type="GO" id="GO:0003886">
    <property type="term" value="F:DNA (cytosine-5-)-methyltransferase activity"/>
    <property type="evidence" value="ECO:0000314"/>
    <property type="project" value="UniProtKB"/>
</dbReference>
<dbReference type="GO" id="GO:0003677">
    <property type="term" value="F:DNA binding"/>
    <property type="evidence" value="ECO:0007669"/>
    <property type="project" value="UniProtKB-KW"/>
</dbReference>
<dbReference type="GO" id="GO:0009307">
    <property type="term" value="P:DNA restriction-modification system"/>
    <property type="evidence" value="ECO:0007669"/>
    <property type="project" value="UniProtKB-KW"/>
</dbReference>
<dbReference type="GO" id="GO:0032259">
    <property type="term" value="P:methylation"/>
    <property type="evidence" value="ECO:0007669"/>
    <property type="project" value="UniProtKB-KW"/>
</dbReference>
<dbReference type="GO" id="GO:0044027">
    <property type="term" value="P:negative regulation of gene expression via chromosomal CpG island methylation"/>
    <property type="evidence" value="ECO:0007669"/>
    <property type="project" value="TreeGrafter"/>
</dbReference>
<dbReference type="Gene3D" id="3.90.120.10">
    <property type="entry name" value="DNA Methylase, subunit A, domain 2"/>
    <property type="match status" value="1"/>
</dbReference>
<dbReference type="Gene3D" id="3.40.50.150">
    <property type="entry name" value="Vaccinia Virus protein VP39"/>
    <property type="match status" value="1"/>
</dbReference>
<dbReference type="InterPro" id="IPR050390">
    <property type="entry name" value="C5-Methyltransferase"/>
</dbReference>
<dbReference type="InterPro" id="IPR018117">
    <property type="entry name" value="C5_DNA_meth_AS"/>
</dbReference>
<dbReference type="InterPro" id="IPR001525">
    <property type="entry name" value="C5_MeTfrase"/>
</dbReference>
<dbReference type="InterPro" id="IPR029063">
    <property type="entry name" value="SAM-dependent_MTases_sf"/>
</dbReference>
<dbReference type="NCBIfam" id="TIGR00675">
    <property type="entry name" value="dcm"/>
    <property type="match status" value="1"/>
</dbReference>
<dbReference type="PANTHER" id="PTHR10629">
    <property type="entry name" value="CYTOSINE-SPECIFIC METHYLTRANSFERASE"/>
    <property type="match status" value="1"/>
</dbReference>
<dbReference type="PANTHER" id="PTHR10629:SF52">
    <property type="entry name" value="DNA (CYTOSINE-5)-METHYLTRANSFERASE 1"/>
    <property type="match status" value="1"/>
</dbReference>
<dbReference type="Pfam" id="PF00145">
    <property type="entry name" value="DNA_methylase"/>
    <property type="match status" value="1"/>
</dbReference>
<dbReference type="PRINTS" id="PR00105">
    <property type="entry name" value="C5METTRFRASE"/>
</dbReference>
<dbReference type="SUPFAM" id="SSF53335">
    <property type="entry name" value="S-adenosyl-L-methionine-dependent methyltransferases"/>
    <property type="match status" value="1"/>
</dbReference>
<dbReference type="PROSITE" id="PS00094">
    <property type="entry name" value="C5_MTASE_1"/>
    <property type="match status" value="1"/>
</dbReference>
<dbReference type="PROSITE" id="PS51679">
    <property type="entry name" value="SAM_MT_C5"/>
    <property type="match status" value="1"/>
</dbReference>
<evidence type="ECO:0000255" key="1">
    <source>
        <dbReference type="PROSITE-ProRule" id="PRU01016"/>
    </source>
</evidence>
<evidence type="ECO:0000255" key="2">
    <source>
        <dbReference type="PROSITE-ProRule" id="PRU10018"/>
    </source>
</evidence>
<evidence type="ECO:0000269" key="3">
    <source>
    </source>
</evidence>
<evidence type="ECO:0000303" key="4">
    <source>
    </source>
</evidence>
<accession>D4ZX35</accession>
<keyword id="KW-0238">DNA-binding</keyword>
<keyword id="KW-0489">Methyltransferase</keyword>
<keyword id="KW-0680">Restriction system</keyword>
<keyword id="KW-0949">S-adenosyl-L-methionine</keyword>
<keyword id="KW-0808">Transferase</keyword>
<reference key="1">
    <citation type="journal article" date="2010" name="DNA Res.">
        <title>Genomic structure of an economically important cyanobacterium, Arthrospira (Spirulina) platensis NIES-39.</title>
        <authorList>
            <person name="Fujisawa T."/>
            <person name="Narikawa R."/>
            <person name="Okamoto S."/>
            <person name="Ehira S."/>
            <person name="Yoshimura H."/>
            <person name="Suzuki I."/>
            <person name="Masuda T."/>
            <person name="Mochimaru M."/>
            <person name="Takaichi S."/>
            <person name="Awai K."/>
            <person name="Sekine M."/>
            <person name="Horikawa H."/>
            <person name="Yashiro I."/>
            <person name="Omata S."/>
            <person name="Takarada H."/>
            <person name="Katano Y."/>
            <person name="Kosugi H."/>
            <person name="Tanikawa S."/>
            <person name="Ohmori K."/>
            <person name="Sato N."/>
            <person name="Ikeuchi M."/>
            <person name="Fujita N."/>
            <person name="Ohmori M."/>
        </authorList>
    </citation>
    <scope>NUCLEOTIDE SEQUENCE [LARGE SCALE GENOMIC DNA]</scope>
    <source>
        <strain>NIES-39 / UTEX 3086 / IAM M-135</strain>
    </source>
</reference>
<reference key="2">
    <citation type="journal article" date="2013" name="Biosci. Biotechnol. Biochem.">
        <title>The AplI restriction-modification system in an edible cyanobacterium, Arthrospira (Spirulina) platensis NIES-39, recognizes the nucleotide sequence 5'-CTGCAG-3'.</title>
        <authorList>
            <person name="Shiraishi H."/>
            <person name="Tabuse Y."/>
        </authorList>
    </citation>
    <scope>FUNCTION</scope>
    <scope>CATALYTIC ACTIVITY</scope>
    <source>
        <strain>NIES-39 / UTEX 3086 / IAM M-135</strain>
    </source>
</reference>
<reference key="3">
    <citation type="journal article" date="2003" name="Nucleic Acids Res.">
        <title>A nomenclature for restriction enzymes, DNA methyltransferases, homing endonucleases and their genes.</title>
        <authorList>
            <person name="Roberts R.J."/>
            <person name="Belfort M."/>
            <person name="Bestor T."/>
            <person name="Bhagwat A.S."/>
            <person name="Bickle T.A."/>
            <person name="Bitinaite J."/>
            <person name="Blumenthal R.M."/>
            <person name="Degtyarev S.K."/>
            <person name="Dryden D.T."/>
            <person name="Dybvig K."/>
            <person name="Firman K."/>
            <person name="Gromova E.S."/>
            <person name="Gumport R.I."/>
            <person name="Halford S.E."/>
            <person name="Hattman S."/>
            <person name="Heitman J."/>
            <person name="Hornby D.P."/>
            <person name="Janulaitis A."/>
            <person name="Jeltsch A."/>
            <person name="Josephsen J."/>
            <person name="Kiss A."/>
            <person name="Klaenhammer T.R."/>
            <person name="Kobayashi I."/>
            <person name="Kong H."/>
            <person name="Krueger D.H."/>
            <person name="Lacks S."/>
            <person name="Marinus M.G."/>
            <person name="Miyahara M."/>
            <person name="Morgan R.D."/>
            <person name="Murray N.E."/>
            <person name="Nagaraja V."/>
            <person name="Piekarowicz A."/>
            <person name="Pingoud A."/>
            <person name="Raleigh E."/>
            <person name="Rao D.N."/>
            <person name="Reich N."/>
            <person name="Repin V.E."/>
            <person name="Selker E.U."/>
            <person name="Shaw P.C."/>
            <person name="Stein D.C."/>
            <person name="Stoddard B.L."/>
            <person name="Szybalski W."/>
            <person name="Trautner T.A."/>
            <person name="Van Etten J.L."/>
            <person name="Vitor J.M."/>
            <person name="Wilson G.G."/>
            <person name="Xu S.Y."/>
        </authorList>
    </citation>
    <scope>NOMENCLATURE</scope>
</reference>
<organism>
    <name type="scientific">Arthrospira platensis (strain NIES-39 / UTEX 3086 / IAM M-135)</name>
    <name type="common">Spirulina platensis</name>
    <dbReference type="NCBI Taxonomy" id="696747"/>
    <lineage>
        <taxon>Bacteria</taxon>
        <taxon>Bacillati</taxon>
        <taxon>Cyanobacteriota</taxon>
        <taxon>Cyanophyceae</taxon>
        <taxon>Oscillatoriophycideae</taxon>
        <taxon>Oscillatoriales</taxon>
        <taxon>Microcoleaceae</taxon>
        <taxon>Arthrospira</taxon>
    </lineage>
</organism>
<name>MTAP_ARTPN</name>
<proteinExistence type="evidence at protein level"/>
<feature type="chain" id="PRO_0000423855" description="Type II methyltransferase M.AplI">
    <location>
        <begin position="1"/>
        <end position="345"/>
    </location>
</feature>
<feature type="domain" description="SAM-dependent MTase C5-type" evidence="1">
    <location>
        <begin position="25"/>
        <end position="325"/>
    </location>
</feature>
<feature type="active site" evidence="1 2">
    <location>
        <position position="93"/>
    </location>
</feature>
<sequence length="345" mass="38880">MSNRLSYWEYLHQELKLNADIQSQLVVLDLFAGCGGFSLGFKAAGFQTIGYEMLADAAATYTRNLQDPCYCQTLEIGQDLCNHPDVIIGGPPCQPFSVGGLQKGPRDSRDGLPIFIDAIARYQPEIAIFENVRGMLYKNRQYLEKIVAELERLNYRVDIKLINAVNYGVPQKRERLFVVAYQTAWNWPEAETLAIPYTAGDAIYDTASTIPIGAKFLTPSMLEYIGRYEAKSKCVKPRDIYLDIPCRTLTCRNLSGATSDMLRLLLPDGRRRRLTVREAARLQSFPDWFELVGSENSQFNQIGNAVPPLLAKAIAKSVKMTLENKPSRPTDYFSPFPQQLKLPFA</sequence>
<gene>
    <name type="primary">aplIM</name>
    <name type="ORF">NIES39_K04650</name>
</gene>
<comment type="function">
    <text evidence="3 4">A methylase, recognizes the double-stranded sequence 5'-CTGCAG-3', methylates C-4 on both strands, and protects the DNA from cleavage by the AplI endonuclease.</text>
</comment>
<comment type="catalytic activity">
    <reaction evidence="2 3">
        <text>a 2'-deoxycytidine in DNA + S-adenosyl-L-methionine = a 5-methyl-2'-deoxycytidine in DNA + S-adenosyl-L-homocysteine + H(+)</text>
        <dbReference type="Rhea" id="RHEA:13681"/>
        <dbReference type="Rhea" id="RHEA-COMP:11369"/>
        <dbReference type="Rhea" id="RHEA-COMP:11370"/>
        <dbReference type="ChEBI" id="CHEBI:15378"/>
        <dbReference type="ChEBI" id="CHEBI:57856"/>
        <dbReference type="ChEBI" id="CHEBI:59789"/>
        <dbReference type="ChEBI" id="CHEBI:85452"/>
        <dbReference type="ChEBI" id="CHEBI:85454"/>
        <dbReference type="EC" id="2.1.1.37"/>
    </reaction>
</comment>
<comment type="similarity">
    <text evidence="1">Belongs to the class I-like SAM-binding methyltransferase superfamily. C5-methyltransferase family.</text>
</comment>
<protein>
    <recommendedName>
        <fullName evidence="4">Type II methyltransferase M.AplI</fullName>
        <shortName evidence="4">M.AplI</shortName>
        <ecNumber evidence="3">2.1.1.37</ecNumber>
    </recommendedName>
    <alternativeName>
        <fullName>Cytosine-specific methyltransferase AplI</fullName>
    </alternativeName>
    <alternativeName>
        <fullName>Modification methylase AplI</fullName>
    </alternativeName>
</protein>